<feature type="chain" id="PRO_0000418495" description="Gallate dioxygenase">
    <location>
        <begin position="1"/>
        <end position="340"/>
    </location>
</feature>
<feature type="active site" description="Proton donor" evidence="1">
    <location>
        <position position="45"/>
    </location>
</feature>
<feature type="active site" description="Proton acceptor" evidence="1">
    <location>
        <position position="113"/>
    </location>
</feature>
<sequence>MADEGGNPRDLPPVGGHAALSRHIGQSLMADEFDMSFFRDKPLDHGFFSPMSALLPCDESWPVQIVPLQVGVLQLPIPTARRCYKLGQALRRAIESYPEDLKVAIVATGGVSHQVHGERCGFNNPEWDAQFLDLLVNDPQRLTEMTLAEYATLGGMEGAEVITWLIMRGTLSANVERKHQSYYLPSMTGIATLLLENRDQALPAPVNERHRQHMQHQLAGAEQLEGTYPYTLERSAKGYRLNKFLHRMIEPQWRQRFLSEPEALYREAGLSEEESDLLRRRDWRGLIHYGVIFFVLEKLGAVLGVSNLDIYAAMRGQSIEDFMKTRNQQVRYSVAGKAPN</sequence>
<evidence type="ECO:0000250" key="1"/>
<evidence type="ECO:0000269" key="2">
    <source>
    </source>
</evidence>
<evidence type="ECO:0000269" key="3">
    <source>
    </source>
</evidence>
<evidence type="ECO:0000305" key="4"/>
<organism>
    <name type="scientific">Pseudomonas putida (strain ATCC 47054 / DSM 6125 / CFBP 8728 / NCIMB 11950 / KT2440)</name>
    <dbReference type="NCBI Taxonomy" id="160488"/>
    <lineage>
        <taxon>Bacteria</taxon>
        <taxon>Pseudomonadati</taxon>
        <taxon>Pseudomonadota</taxon>
        <taxon>Gammaproteobacteria</taxon>
        <taxon>Pseudomonadales</taxon>
        <taxon>Pseudomonadaceae</taxon>
        <taxon>Pseudomonas</taxon>
    </lineage>
</organism>
<gene>
    <name type="primary">galA</name>
    <name type="ordered locus">PP_2518</name>
</gene>
<reference key="1">
    <citation type="journal article" date="2002" name="Environ. Microbiol.">
        <title>Complete genome sequence and comparative analysis of the metabolically versatile Pseudomonas putida KT2440.</title>
        <authorList>
            <person name="Nelson K.E."/>
            <person name="Weinel C."/>
            <person name="Paulsen I.T."/>
            <person name="Dodson R.J."/>
            <person name="Hilbert H."/>
            <person name="Martins dos Santos V.A.P."/>
            <person name="Fouts D.E."/>
            <person name="Gill S.R."/>
            <person name="Pop M."/>
            <person name="Holmes M."/>
            <person name="Brinkac L.M."/>
            <person name="Beanan M.J."/>
            <person name="DeBoy R.T."/>
            <person name="Daugherty S.C."/>
            <person name="Kolonay J.F."/>
            <person name="Madupu R."/>
            <person name="Nelson W.C."/>
            <person name="White O."/>
            <person name="Peterson J.D."/>
            <person name="Khouri H.M."/>
            <person name="Hance I."/>
            <person name="Chris Lee P."/>
            <person name="Holtzapple E.K."/>
            <person name="Scanlan D."/>
            <person name="Tran K."/>
            <person name="Moazzez A."/>
            <person name="Utterback T.R."/>
            <person name="Rizzo M."/>
            <person name="Lee K."/>
            <person name="Kosack D."/>
            <person name="Moestl D."/>
            <person name="Wedler H."/>
            <person name="Lauber J."/>
            <person name="Stjepandic D."/>
            <person name="Hoheisel J."/>
            <person name="Straetz M."/>
            <person name="Heim S."/>
            <person name="Kiewitz C."/>
            <person name="Eisen J.A."/>
            <person name="Timmis K.N."/>
            <person name="Duesterhoeft A."/>
            <person name="Tuemmler B."/>
            <person name="Fraser C.M."/>
        </authorList>
    </citation>
    <scope>NUCLEOTIDE SEQUENCE [LARGE SCALE GENOMIC DNA]</scope>
    <source>
        <strain>ATCC 47054 / DSM 6125 / CFBP 8728 / NCIMB 11950 / KT2440</strain>
    </source>
</reference>
<reference key="2">
    <citation type="journal article" date="2005" name="J. Biol. Chem.">
        <title>Molecular characterization of the gallate dioxygenase from Pseudomonas putida KT2440. The prototype of a new subgroup of extradiol dioxygenases.</title>
        <authorList>
            <person name="Nogales J."/>
            <person name="Canales A."/>
            <person name="Jimenez-Barbero J."/>
            <person name="Garcia J.L."/>
            <person name="Diaz E."/>
        </authorList>
    </citation>
    <scope>FUNCTION</scope>
    <scope>CATALYTIC ACTIVITY</scope>
    <scope>BIOPHYSICOCHEMICAL PROPERTIES</scope>
    <scope>COFACTOR</scope>
    <scope>INDUCTION</scope>
    <source>
        <strain>ATCC 47054 / DSM 6125 / CFBP 8728 / NCIMB 11950 / KT2440</strain>
    </source>
</reference>
<reference key="3">
    <citation type="journal article" date="2011" name="Mol. Microbiol.">
        <title>Unravelling the gallic acid degradation pathway in bacteria: the gal cluster from Pseudomonas putida.</title>
        <authorList>
            <person name="Nogales J."/>
            <person name="Canales A."/>
            <person name="Jimenez-Barbero J."/>
            <person name="Serra B."/>
            <person name="Pingarron J.M."/>
            <person name="Garcia J.L."/>
            <person name="Diaz E."/>
        </authorList>
    </citation>
    <scope>FUNCTION</scope>
    <scope>CATALYTIC ACTIVITY</scope>
    <scope>PATHWAY</scope>
    <source>
        <strain>ATCC 47054 / DSM 6125 / CFBP 8728 / NCIMB 11950 / KT2440</strain>
    </source>
</reference>
<comment type="function">
    <text evidence="2 3">Ring-cleavage dioxygenase that acts specifically on gallate to produce the keto-tautomer of 4-oxalomesaconate. Mediates the first step of gallate degradation pathway.</text>
</comment>
<comment type="catalytic activity">
    <reaction evidence="2 3">
        <text>3,4,5-trihydroxybenzoate + O2 = (1E)-4-oxobut-1-ene-1,2,4-tricarboxylate + 2 H(+)</text>
        <dbReference type="Rhea" id="RHEA:28927"/>
        <dbReference type="ChEBI" id="CHEBI:15378"/>
        <dbReference type="ChEBI" id="CHEBI:15379"/>
        <dbReference type="ChEBI" id="CHEBI:16918"/>
        <dbReference type="ChEBI" id="CHEBI:57471"/>
        <dbReference type="EC" id="1.13.11.57"/>
    </reaction>
</comment>
<comment type="cofactor">
    <cofactor evidence="2">
        <name>Fe(2+)</name>
        <dbReference type="ChEBI" id="CHEBI:29033"/>
    </cofactor>
</comment>
<comment type="biophysicochemical properties">
    <kinetics>
        <KM evidence="2">144 uM for gallate</KM>
        <Vmax evidence="2">53.2 umol/min/mg enzyme with gallate as substrate</Vmax>
    </kinetics>
    <phDependence>
        <text evidence="2">Optimum pH is 7.0.</text>
    </phDependence>
</comment>
<comment type="induction">
    <text evidence="2">By gallate.</text>
</comment>
<comment type="similarity">
    <text evidence="4">Belongs to the LigB/MhpB extradiol dioxygenase family.</text>
</comment>
<accession>Q88JX5</accession>
<name>GALA_PSEPK</name>
<protein>
    <recommendedName>
        <fullName>Gallate dioxygenase</fullName>
        <ecNumber>1.13.11.57</ecNumber>
    </recommendedName>
    <alternativeName>
        <fullName>Gallate degradation protein A</fullName>
    </alternativeName>
</protein>
<keyword id="KW-0058">Aromatic hydrocarbons catabolism</keyword>
<keyword id="KW-0223">Dioxygenase</keyword>
<keyword id="KW-0560">Oxidoreductase</keyword>
<keyword id="KW-1185">Reference proteome</keyword>
<dbReference type="EC" id="1.13.11.57"/>
<dbReference type="EMBL" id="AE015451">
    <property type="protein sequence ID" value="AAN68130.1"/>
    <property type="molecule type" value="Genomic_DNA"/>
</dbReference>
<dbReference type="RefSeq" id="NP_744666.2">
    <property type="nucleotide sequence ID" value="NC_002947.4"/>
</dbReference>
<dbReference type="SMR" id="Q88JX5"/>
<dbReference type="STRING" id="160488.PP_2518"/>
<dbReference type="PaxDb" id="160488-PP_2518"/>
<dbReference type="KEGG" id="ag:AAN68130"/>
<dbReference type="KEGG" id="ppu:PP_2518"/>
<dbReference type="PATRIC" id="fig|160488.4.peg.2673"/>
<dbReference type="eggNOG" id="COG3384">
    <property type="taxonomic scope" value="Bacteria"/>
</dbReference>
<dbReference type="HOGENOM" id="CLU_653589_0_0_6"/>
<dbReference type="OrthoDB" id="8673673at2"/>
<dbReference type="PhylomeDB" id="Q88JX5"/>
<dbReference type="BioCyc" id="MetaCyc:G1G01-2702-MONOMER"/>
<dbReference type="BioCyc" id="PPUT160488:G1G01-2702-MONOMER"/>
<dbReference type="Proteomes" id="UP000000556">
    <property type="component" value="Chromosome"/>
</dbReference>
<dbReference type="GO" id="GO:0008198">
    <property type="term" value="F:ferrous iron binding"/>
    <property type="evidence" value="ECO:0000314"/>
    <property type="project" value="UniProtKB"/>
</dbReference>
<dbReference type="GO" id="GO:0036238">
    <property type="term" value="F:gallate dioxygenase activity"/>
    <property type="evidence" value="ECO:0000314"/>
    <property type="project" value="UniProtKB"/>
</dbReference>
<dbReference type="GO" id="GO:0019396">
    <property type="term" value="P:gallate catabolic process"/>
    <property type="evidence" value="ECO:0000314"/>
    <property type="project" value="UniProtKB"/>
</dbReference>
<dbReference type="CDD" id="cd07923">
    <property type="entry name" value="Gallate_dioxygenase_C"/>
    <property type="match status" value="1"/>
</dbReference>
<dbReference type="Gene3D" id="1.10.700.10">
    <property type="entry name" value="Dioxygenase LigAB, LigA subunit"/>
    <property type="match status" value="1"/>
</dbReference>
<dbReference type="Gene3D" id="3.40.830.10">
    <property type="entry name" value="LigB-like"/>
    <property type="match status" value="1"/>
</dbReference>
<dbReference type="InterPro" id="IPR034940">
    <property type="entry name" value="Gallate_dioxygenase_C"/>
</dbReference>
<dbReference type="InterPro" id="IPR036622">
    <property type="entry name" value="LigA_sf"/>
</dbReference>
<dbReference type="InterPro" id="IPR011986">
    <property type="entry name" value="Xdiol_dOase_LigA"/>
</dbReference>
<dbReference type="InterPro" id="IPR004183">
    <property type="entry name" value="Xdiol_dOase_suB"/>
</dbReference>
<dbReference type="NCBIfam" id="NF009904">
    <property type="entry name" value="PRK13367.1"/>
    <property type="match status" value="1"/>
</dbReference>
<dbReference type="Pfam" id="PF07746">
    <property type="entry name" value="LigA"/>
    <property type="match status" value="1"/>
</dbReference>
<dbReference type="Pfam" id="PF02900">
    <property type="entry name" value="LigB"/>
    <property type="match status" value="1"/>
</dbReference>
<dbReference type="SUPFAM" id="SSF48076">
    <property type="entry name" value="LigA subunit of an aromatic-ring-opening dioxygenase LigAB"/>
    <property type="match status" value="1"/>
</dbReference>
<dbReference type="SUPFAM" id="SSF53213">
    <property type="entry name" value="LigB-like"/>
    <property type="match status" value="1"/>
</dbReference>
<proteinExistence type="evidence at protein level"/>